<protein>
    <recommendedName>
        <fullName evidence="1">Putative N-acetylmannosamine-6-phosphate 2-epimerase</fullName>
        <ecNumber evidence="1">5.1.3.9</ecNumber>
    </recommendedName>
    <alternativeName>
        <fullName evidence="1">ManNAc-6-P epimerase</fullName>
    </alternativeName>
</protein>
<comment type="function">
    <text evidence="1">Converts N-acetylmannosamine-6-phosphate (ManNAc-6-P) to N-acetylglucosamine-6-phosphate (GlcNAc-6-P).</text>
</comment>
<comment type="catalytic activity">
    <reaction evidence="1">
        <text>an N-acyl-D-glucosamine 6-phosphate = an N-acyl-D-mannosamine 6-phosphate</text>
        <dbReference type="Rhea" id="RHEA:23932"/>
        <dbReference type="ChEBI" id="CHEBI:57599"/>
        <dbReference type="ChEBI" id="CHEBI:57666"/>
        <dbReference type="EC" id="5.1.3.9"/>
    </reaction>
</comment>
<comment type="pathway">
    <text evidence="1">Amino-sugar metabolism; N-acetylneuraminate degradation; D-fructose 6-phosphate from N-acetylneuraminate: step 3/5.</text>
</comment>
<comment type="similarity">
    <text evidence="1">Belongs to the NanE family.</text>
</comment>
<accession>Q3YX25</accession>
<organism>
    <name type="scientific">Shigella sonnei (strain Ss046)</name>
    <dbReference type="NCBI Taxonomy" id="300269"/>
    <lineage>
        <taxon>Bacteria</taxon>
        <taxon>Pseudomonadati</taxon>
        <taxon>Pseudomonadota</taxon>
        <taxon>Gammaproteobacteria</taxon>
        <taxon>Enterobacterales</taxon>
        <taxon>Enterobacteriaceae</taxon>
        <taxon>Shigella</taxon>
    </lineage>
</organism>
<name>NANE_SHISS</name>
<dbReference type="EC" id="5.1.3.9" evidence="1"/>
<dbReference type="EMBL" id="CP000038">
    <property type="protein sequence ID" value="AAZ89937.1"/>
    <property type="molecule type" value="Genomic_DNA"/>
</dbReference>
<dbReference type="RefSeq" id="WP_005140275.1">
    <property type="nucleotide sequence ID" value="NC_007384.1"/>
</dbReference>
<dbReference type="SMR" id="Q3YX25"/>
<dbReference type="KEGG" id="ssn:SSON_3364"/>
<dbReference type="HOGENOM" id="CLU_086300_0_0_6"/>
<dbReference type="UniPathway" id="UPA00629">
    <property type="reaction ID" value="UER00682"/>
</dbReference>
<dbReference type="Proteomes" id="UP000002529">
    <property type="component" value="Chromosome"/>
</dbReference>
<dbReference type="GO" id="GO:0005829">
    <property type="term" value="C:cytosol"/>
    <property type="evidence" value="ECO:0007669"/>
    <property type="project" value="TreeGrafter"/>
</dbReference>
<dbReference type="GO" id="GO:0047465">
    <property type="term" value="F:N-acylglucosamine-6-phosphate 2-epimerase activity"/>
    <property type="evidence" value="ECO:0007669"/>
    <property type="project" value="UniProtKB-EC"/>
</dbReference>
<dbReference type="GO" id="GO:0005975">
    <property type="term" value="P:carbohydrate metabolic process"/>
    <property type="evidence" value="ECO:0007669"/>
    <property type="project" value="UniProtKB-UniRule"/>
</dbReference>
<dbReference type="GO" id="GO:0006053">
    <property type="term" value="P:N-acetylmannosamine catabolic process"/>
    <property type="evidence" value="ECO:0007669"/>
    <property type="project" value="TreeGrafter"/>
</dbReference>
<dbReference type="GO" id="GO:0019262">
    <property type="term" value="P:N-acetylneuraminate catabolic process"/>
    <property type="evidence" value="ECO:0007669"/>
    <property type="project" value="UniProtKB-UniRule"/>
</dbReference>
<dbReference type="CDD" id="cd04729">
    <property type="entry name" value="NanE"/>
    <property type="match status" value="1"/>
</dbReference>
<dbReference type="FunFam" id="3.20.20.70:FF:000035">
    <property type="entry name" value="Putative N-acetylmannosamine-6-phosphate 2-epimerase"/>
    <property type="match status" value="1"/>
</dbReference>
<dbReference type="Gene3D" id="3.20.20.70">
    <property type="entry name" value="Aldolase class I"/>
    <property type="match status" value="1"/>
</dbReference>
<dbReference type="HAMAP" id="MF_01235">
    <property type="entry name" value="ManNAc6P_epimer"/>
    <property type="match status" value="1"/>
</dbReference>
<dbReference type="InterPro" id="IPR013785">
    <property type="entry name" value="Aldolase_TIM"/>
</dbReference>
<dbReference type="InterPro" id="IPR007260">
    <property type="entry name" value="NanE"/>
</dbReference>
<dbReference type="InterPro" id="IPR011060">
    <property type="entry name" value="RibuloseP-bd_barrel"/>
</dbReference>
<dbReference type="NCBIfam" id="NF002231">
    <property type="entry name" value="PRK01130.1"/>
    <property type="match status" value="1"/>
</dbReference>
<dbReference type="PANTHER" id="PTHR36204">
    <property type="entry name" value="N-ACETYLMANNOSAMINE-6-PHOSPHATE 2-EPIMERASE-RELATED"/>
    <property type="match status" value="1"/>
</dbReference>
<dbReference type="PANTHER" id="PTHR36204:SF1">
    <property type="entry name" value="N-ACETYLMANNOSAMINE-6-PHOSPHATE 2-EPIMERASE-RELATED"/>
    <property type="match status" value="1"/>
</dbReference>
<dbReference type="Pfam" id="PF04131">
    <property type="entry name" value="NanE"/>
    <property type="match status" value="1"/>
</dbReference>
<dbReference type="SUPFAM" id="SSF51366">
    <property type="entry name" value="Ribulose-phoshate binding barrel"/>
    <property type="match status" value="1"/>
</dbReference>
<sequence length="229" mass="24102">MSLLAQLDQKIAANGGLIVSCQPIPDSPLDKPEIVAAMALAAEQAGAVAIRIEGVANLQATRAVVSVPIIGIVKRDLEDSPVRITAYIEDVDALAQAGADIIAIDGTDRPRPVPVETLLARIHHHGLLAMTDCSTPEDGLACQKLGAEIIGTTLSGYTTPETPEEPDLALVKTLSEAGCRVIAEGRYNTPAQAADAMRHGAWAVTVGSAITRLEHICQWYNTAMKKAVL</sequence>
<reference key="1">
    <citation type="journal article" date="2005" name="Nucleic Acids Res.">
        <title>Genome dynamics and diversity of Shigella species, the etiologic agents of bacillary dysentery.</title>
        <authorList>
            <person name="Yang F."/>
            <person name="Yang J."/>
            <person name="Zhang X."/>
            <person name="Chen L."/>
            <person name="Jiang Y."/>
            <person name="Yan Y."/>
            <person name="Tang X."/>
            <person name="Wang J."/>
            <person name="Xiong Z."/>
            <person name="Dong J."/>
            <person name="Xue Y."/>
            <person name="Zhu Y."/>
            <person name="Xu X."/>
            <person name="Sun L."/>
            <person name="Chen S."/>
            <person name="Nie H."/>
            <person name="Peng J."/>
            <person name="Xu J."/>
            <person name="Wang Y."/>
            <person name="Yuan Z."/>
            <person name="Wen Y."/>
            <person name="Yao Z."/>
            <person name="Shen Y."/>
            <person name="Qiang B."/>
            <person name="Hou Y."/>
            <person name="Yu J."/>
            <person name="Jin Q."/>
        </authorList>
    </citation>
    <scope>NUCLEOTIDE SEQUENCE [LARGE SCALE GENOMIC DNA]</scope>
    <source>
        <strain>Ss046</strain>
    </source>
</reference>
<keyword id="KW-0119">Carbohydrate metabolism</keyword>
<keyword id="KW-0413">Isomerase</keyword>
<keyword id="KW-1185">Reference proteome</keyword>
<gene>
    <name evidence="1" type="primary">nanE</name>
    <name type="ordered locus">SSON_3364</name>
</gene>
<evidence type="ECO:0000255" key="1">
    <source>
        <dbReference type="HAMAP-Rule" id="MF_01235"/>
    </source>
</evidence>
<feature type="chain" id="PRO_0000301483" description="Putative N-acetylmannosamine-6-phosphate 2-epimerase">
    <location>
        <begin position="1"/>
        <end position="229"/>
    </location>
</feature>
<proteinExistence type="inferred from homology"/>